<protein>
    <recommendedName>
        <fullName evidence="1">CCA-adding enzyme</fullName>
        <ecNumber evidence="1">2.7.7.72</ecNumber>
    </recommendedName>
    <alternativeName>
        <fullName evidence="1">CCA tRNA nucleotidyltransferase</fullName>
    </alternativeName>
    <alternativeName>
        <fullName evidence="1">tRNA CCA-pyrophosphorylase</fullName>
    </alternativeName>
    <alternativeName>
        <fullName evidence="1">tRNA adenylyl-/cytidylyl- transferase</fullName>
    </alternativeName>
    <alternativeName>
        <fullName evidence="1">tRNA nucleotidyltransferase</fullName>
    </alternativeName>
    <alternativeName>
        <fullName evidence="1">tRNA-NT</fullName>
    </alternativeName>
</protein>
<evidence type="ECO:0000255" key="1">
    <source>
        <dbReference type="HAMAP-Rule" id="MF_01262"/>
    </source>
</evidence>
<reference key="1">
    <citation type="journal article" date="2003" name="Proc. Natl. Acad. Sci. U.S.A.">
        <title>Reductive genome evolution in Buchnera aphidicola.</title>
        <authorList>
            <person name="van Ham R.C.H.J."/>
            <person name="Kamerbeek J."/>
            <person name="Palacios C."/>
            <person name="Rausell C."/>
            <person name="Abascal F."/>
            <person name="Bastolla U."/>
            <person name="Fernandez J.M."/>
            <person name="Jimenez L."/>
            <person name="Postigo M."/>
            <person name="Silva F.J."/>
            <person name="Tamames J."/>
            <person name="Viguera E."/>
            <person name="Latorre A."/>
            <person name="Valencia A."/>
            <person name="Moran F."/>
            <person name="Moya A."/>
        </authorList>
    </citation>
    <scope>NUCLEOTIDE SEQUENCE [LARGE SCALE GENOMIC DNA]</scope>
    <source>
        <strain>Bp</strain>
    </source>
</reference>
<feature type="chain" id="PRO_0000139019" description="CCA-adding enzyme">
    <location>
        <begin position="1"/>
        <end position="419"/>
    </location>
</feature>
<feature type="binding site" evidence="1">
    <location>
        <position position="8"/>
    </location>
    <ligand>
        <name>ATP</name>
        <dbReference type="ChEBI" id="CHEBI:30616"/>
    </ligand>
</feature>
<feature type="binding site" evidence="1">
    <location>
        <position position="8"/>
    </location>
    <ligand>
        <name>CTP</name>
        <dbReference type="ChEBI" id="CHEBI:37563"/>
    </ligand>
</feature>
<feature type="binding site" evidence="1">
    <location>
        <position position="11"/>
    </location>
    <ligand>
        <name>ATP</name>
        <dbReference type="ChEBI" id="CHEBI:30616"/>
    </ligand>
</feature>
<feature type="binding site" evidence="1">
    <location>
        <position position="11"/>
    </location>
    <ligand>
        <name>CTP</name>
        <dbReference type="ChEBI" id="CHEBI:37563"/>
    </ligand>
</feature>
<feature type="binding site" evidence="1">
    <location>
        <position position="21"/>
    </location>
    <ligand>
        <name>Mg(2+)</name>
        <dbReference type="ChEBI" id="CHEBI:18420"/>
    </ligand>
</feature>
<feature type="binding site" evidence="1">
    <location>
        <position position="23"/>
    </location>
    <ligand>
        <name>Mg(2+)</name>
        <dbReference type="ChEBI" id="CHEBI:18420"/>
    </ligand>
</feature>
<feature type="binding site" evidence="1">
    <location>
        <position position="91"/>
    </location>
    <ligand>
        <name>ATP</name>
        <dbReference type="ChEBI" id="CHEBI:30616"/>
    </ligand>
</feature>
<feature type="binding site" evidence="1">
    <location>
        <position position="91"/>
    </location>
    <ligand>
        <name>CTP</name>
        <dbReference type="ChEBI" id="CHEBI:37563"/>
    </ligand>
</feature>
<feature type="binding site" evidence="1">
    <location>
        <position position="137"/>
    </location>
    <ligand>
        <name>ATP</name>
        <dbReference type="ChEBI" id="CHEBI:30616"/>
    </ligand>
</feature>
<feature type="binding site" evidence="1">
    <location>
        <position position="137"/>
    </location>
    <ligand>
        <name>CTP</name>
        <dbReference type="ChEBI" id="CHEBI:37563"/>
    </ligand>
</feature>
<feature type="binding site" evidence="1">
    <location>
        <position position="140"/>
    </location>
    <ligand>
        <name>ATP</name>
        <dbReference type="ChEBI" id="CHEBI:30616"/>
    </ligand>
</feature>
<feature type="binding site" evidence="1">
    <location>
        <position position="140"/>
    </location>
    <ligand>
        <name>CTP</name>
        <dbReference type="ChEBI" id="CHEBI:37563"/>
    </ligand>
</feature>
<dbReference type="EC" id="2.7.7.72" evidence="1"/>
<dbReference type="EMBL" id="AE016826">
    <property type="protein sequence ID" value="AAO26796.1"/>
    <property type="molecule type" value="Genomic_DNA"/>
</dbReference>
<dbReference type="RefSeq" id="WP_011091197.1">
    <property type="nucleotide sequence ID" value="NC_004545.1"/>
</dbReference>
<dbReference type="STRING" id="224915.bbp_057"/>
<dbReference type="KEGG" id="bab:bbp_057"/>
<dbReference type="eggNOG" id="COG0617">
    <property type="taxonomic scope" value="Bacteria"/>
</dbReference>
<dbReference type="HOGENOM" id="CLU_015961_1_1_6"/>
<dbReference type="OrthoDB" id="9805698at2"/>
<dbReference type="Proteomes" id="UP000000601">
    <property type="component" value="Chromosome"/>
</dbReference>
<dbReference type="GO" id="GO:0005524">
    <property type="term" value="F:ATP binding"/>
    <property type="evidence" value="ECO:0007669"/>
    <property type="project" value="UniProtKB-UniRule"/>
</dbReference>
<dbReference type="GO" id="GO:0004810">
    <property type="term" value="F:CCA tRNA nucleotidyltransferase activity"/>
    <property type="evidence" value="ECO:0007669"/>
    <property type="project" value="UniProtKB-UniRule"/>
</dbReference>
<dbReference type="GO" id="GO:0000287">
    <property type="term" value="F:magnesium ion binding"/>
    <property type="evidence" value="ECO:0007669"/>
    <property type="project" value="UniProtKB-UniRule"/>
</dbReference>
<dbReference type="GO" id="GO:0000049">
    <property type="term" value="F:tRNA binding"/>
    <property type="evidence" value="ECO:0007669"/>
    <property type="project" value="UniProtKB-UniRule"/>
</dbReference>
<dbReference type="GO" id="GO:0042245">
    <property type="term" value="P:RNA repair"/>
    <property type="evidence" value="ECO:0007669"/>
    <property type="project" value="UniProtKB-KW"/>
</dbReference>
<dbReference type="GO" id="GO:0001680">
    <property type="term" value="P:tRNA 3'-terminal CCA addition"/>
    <property type="evidence" value="ECO:0007669"/>
    <property type="project" value="UniProtKB-UniRule"/>
</dbReference>
<dbReference type="CDD" id="cd05398">
    <property type="entry name" value="NT_ClassII-CCAase"/>
    <property type="match status" value="1"/>
</dbReference>
<dbReference type="Gene3D" id="3.30.460.10">
    <property type="entry name" value="Beta Polymerase, domain 2"/>
    <property type="match status" value="1"/>
</dbReference>
<dbReference type="Gene3D" id="1.10.3090.10">
    <property type="entry name" value="cca-adding enzyme, domain 2"/>
    <property type="match status" value="1"/>
</dbReference>
<dbReference type="HAMAP" id="MF_01262">
    <property type="entry name" value="CCA_bact_type2"/>
    <property type="match status" value="1"/>
</dbReference>
<dbReference type="InterPro" id="IPR012006">
    <property type="entry name" value="CCA_bact"/>
</dbReference>
<dbReference type="InterPro" id="IPR043519">
    <property type="entry name" value="NT_sf"/>
</dbReference>
<dbReference type="InterPro" id="IPR002646">
    <property type="entry name" value="PolA_pol_head_dom"/>
</dbReference>
<dbReference type="InterPro" id="IPR032828">
    <property type="entry name" value="PolyA_RNA-bd"/>
</dbReference>
<dbReference type="InterPro" id="IPR050124">
    <property type="entry name" value="tRNA_CCA-adding_enzyme"/>
</dbReference>
<dbReference type="NCBIfam" id="NF009813">
    <property type="entry name" value="PRK13298.1"/>
    <property type="match status" value="1"/>
</dbReference>
<dbReference type="PANTHER" id="PTHR47545">
    <property type="entry name" value="MULTIFUNCTIONAL CCA PROTEIN"/>
    <property type="match status" value="1"/>
</dbReference>
<dbReference type="PANTHER" id="PTHR47545:SF1">
    <property type="entry name" value="MULTIFUNCTIONAL CCA PROTEIN"/>
    <property type="match status" value="1"/>
</dbReference>
<dbReference type="Pfam" id="PF01743">
    <property type="entry name" value="PolyA_pol"/>
    <property type="match status" value="1"/>
</dbReference>
<dbReference type="Pfam" id="PF12627">
    <property type="entry name" value="PolyA_pol_RNAbd"/>
    <property type="match status" value="1"/>
</dbReference>
<dbReference type="PIRSF" id="PIRSF000813">
    <property type="entry name" value="CCA_bact"/>
    <property type="match status" value="1"/>
</dbReference>
<dbReference type="SUPFAM" id="SSF81301">
    <property type="entry name" value="Nucleotidyltransferase"/>
    <property type="match status" value="1"/>
</dbReference>
<dbReference type="SUPFAM" id="SSF81891">
    <property type="entry name" value="Poly A polymerase C-terminal region-like"/>
    <property type="match status" value="1"/>
</dbReference>
<accession>Q89B06</accession>
<organism>
    <name type="scientific">Buchnera aphidicola subsp. Baizongia pistaciae (strain Bp)</name>
    <dbReference type="NCBI Taxonomy" id="224915"/>
    <lineage>
        <taxon>Bacteria</taxon>
        <taxon>Pseudomonadati</taxon>
        <taxon>Pseudomonadota</taxon>
        <taxon>Gammaproteobacteria</taxon>
        <taxon>Enterobacterales</taxon>
        <taxon>Erwiniaceae</taxon>
        <taxon>Buchnera</taxon>
    </lineage>
</organism>
<comment type="function">
    <text evidence="1">Catalyzes the addition and repair of the essential 3'-terminal CCA sequence in tRNAs without using a nucleic acid template. Adds these three nucleotides in the order of C, C, and A to the tRNA nucleotide-73, using CTP and ATP as substrates and producing inorganic pyrophosphate. tRNA 3'-terminal CCA addition is required both for tRNA processing and repair. Also involved in tRNA surveillance by mediating tandem CCA addition to generate a CCACCA at the 3' terminus of unstable tRNAs. While stable tRNAs receive only 3'-terminal CCA, unstable tRNAs are marked with CCACCA and rapidly degraded.</text>
</comment>
<comment type="catalytic activity">
    <reaction evidence="1">
        <text>a tRNA precursor + 2 CTP + ATP = a tRNA with a 3' CCA end + 3 diphosphate</text>
        <dbReference type="Rhea" id="RHEA:14433"/>
        <dbReference type="Rhea" id="RHEA-COMP:10465"/>
        <dbReference type="Rhea" id="RHEA-COMP:10468"/>
        <dbReference type="ChEBI" id="CHEBI:30616"/>
        <dbReference type="ChEBI" id="CHEBI:33019"/>
        <dbReference type="ChEBI" id="CHEBI:37563"/>
        <dbReference type="ChEBI" id="CHEBI:74896"/>
        <dbReference type="ChEBI" id="CHEBI:83071"/>
        <dbReference type="EC" id="2.7.7.72"/>
    </reaction>
</comment>
<comment type="catalytic activity">
    <reaction evidence="1">
        <text>a tRNA with a 3' CCA end + 2 CTP + ATP = a tRNA with a 3' CCACCA end + 3 diphosphate</text>
        <dbReference type="Rhea" id="RHEA:76235"/>
        <dbReference type="Rhea" id="RHEA-COMP:10468"/>
        <dbReference type="Rhea" id="RHEA-COMP:18655"/>
        <dbReference type="ChEBI" id="CHEBI:30616"/>
        <dbReference type="ChEBI" id="CHEBI:33019"/>
        <dbReference type="ChEBI" id="CHEBI:37563"/>
        <dbReference type="ChEBI" id="CHEBI:83071"/>
        <dbReference type="ChEBI" id="CHEBI:195187"/>
    </reaction>
    <physiologicalReaction direction="left-to-right" evidence="1">
        <dbReference type="Rhea" id="RHEA:76236"/>
    </physiologicalReaction>
</comment>
<comment type="cofactor">
    <cofactor evidence="1">
        <name>Mg(2+)</name>
        <dbReference type="ChEBI" id="CHEBI:18420"/>
    </cofactor>
</comment>
<comment type="miscellaneous">
    <text evidence="1">A single active site specifically recognizes both ATP and CTP and is responsible for their addition.</text>
</comment>
<comment type="similarity">
    <text evidence="1">Belongs to the tRNA nucleotidyltransferase/poly(A) polymerase family. Bacterial CCA-adding enzyme type 2 subfamily.</text>
</comment>
<gene>
    <name evidence="1" type="primary">cca</name>
    <name type="ordered locus">bbp_057</name>
</gene>
<name>CCA_BUCBP</name>
<keyword id="KW-0067">ATP-binding</keyword>
<keyword id="KW-0460">Magnesium</keyword>
<keyword id="KW-0479">Metal-binding</keyword>
<keyword id="KW-0547">Nucleotide-binding</keyword>
<keyword id="KW-0548">Nucleotidyltransferase</keyword>
<keyword id="KW-1185">Reference proteome</keyword>
<keyword id="KW-0692">RNA repair</keyword>
<keyword id="KW-0694">RNA-binding</keyword>
<keyword id="KW-0808">Transferase</keyword>
<keyword id="KW-0819">tRNA processing</keyword>
<sequence length="419" mass="49614">MKVYLVGGAIRNKFLNLPVQDRDWVVVGATPEILLSLKFKQVGKGFPVFLHPYSKEEYSLARVDRKIGVGHTGFSFDYSNKVTLKEDLMRRDLTINAIAQDNNGNYIDPFKGIRDIKNRILRHVSPAFSEDPLRVLRIARFCALFHHLGFRIATETMKIMSIVVKNNELLNLTRDRVWKETEKAFNTDNPHVYFQVLKNCNALSVIFPEINLVYQRQYYCIDNMYHNFYDTFDIFMGLAELSKISRDIDIRFSYLFFCINRMLFIDTSSYILVINQKELVRYFKALCQRFCIPAYIKNVSICFSRFYKFLSVIHYQSSKDIIMFFYIIDAWRKPYMIRKLSVLNNFCVSRNAYFKNITCQQYPRNFLKYAFNVANKISIKPILKMGFSGLQIKYELIRLRINAIENWRQNITVYKKCCF</sequence>
<proteinExistence type="inferred from homology"/>